<proteinExistence type="inferred from homology"/>
<organism>
    <name type="scientific">Caenorhabditis elegans</name>
    <dbReference type="NCBI Taxonomy" id="6239"/>
    <lineage>
        <taxon>Eukaryota</taxon>
        <taxon>Metazoa</taxon>
        <taxon>Ecdysozoa</taxon>
        <taxon>Nematoda</taxon>
        <taxon>Chromadorea</taxon>
        <taxon>Rhabditida</taxon>
        <taxon>Rhabditina</taxon>
        <taxon>Rhabditomorpha</taxon>
        <taxon>Rhabditoidea</taxon>
        <taxon>Rhabditidae</taxon>
        <taxon>Peloderinae</taxon>
        <taxon>Caenorhabditis</taxon>
    </lineage>
</organism>
<reference key="1">
    <citation type="journal article" date="1998" name="Science">
        <title>Genome sequence of the nematode C. elegans: a platform for investigating biology.</title>
        <authorList>
            <consortium name="The C. elegans sequencing consortium"/>
        </authorList>
    </citation>
    <scope>NUCLEOTIDE SEQUENCE [LARGE SCALE GENOMIC DNA]</scope>
    <source>
        <strain>Bristol N2</strain>
    </source>
</reference>
<evidence type="ECO:0000255" key="1">
    <source>
        <dbReference type="HAMAP-Rule" id="MF_03002"/>
    </source>
</evidence>
<evidence type="ECO:0000255" key="2">
    <source>
        <dbReference type="PROSITE-ProRule" id="PRU01185"/>
    </source>
</evidence>
<evidence type="ECO:0000256" key="3">
    <source>
        <dbReference type="SAM" id="MobiDB-lite"/>
    </source>
</evidence>
<sequence>MSRFFHAKEDSDSDTSSSEDEVEDQKVNKSAKFRDDLDFMAGPEEDEKRVVRAQKDKKFDELKGIIKQNRDAKSNKDLNRLLTGFDSLAKAYDKSKTVFQRQNVANPRFYIRSLVEIEDYVNKLWDDKDAKSALSKNNAKALPPLRQKLKKYIKDQQLQDLVTDYRVNPDEDGYETPEDEDDDDFGEVSESKAEKSPGKPSEKAAVSDSDSDSDDDDSSNWSSEPESNSSDDEDSVTKMEQLRRYFLKKEFRVESKDDKKEKKKRVIRVKEAVEEDDDADWTPVNREKSVVHFDPKEEVTHDVMIKKLNEVMSARGKRTTDRNQHVANLRKLLEVSEEKELGLGINVKISFCIISALFELNAKISDHMEYETFMTTLQTVNSLLDLLIGTDRVKLSVTYAEEDENLKDDTQEYRIQGSILIAVQRLDGELAKILQNADCHSNDYIEKLKAEKDMCSLIEKAEKYVELRNDSGIFDKHEVCKVYMMRIEHAYYKYQDQNEEDAGKLMDYLCNKIYTLDDEKRLRQRAMLCHVYYLAVHDKWHRARDLLLMSHMQAIVDHSDVDTQILYNRTICQLGLCAFRHGFIREAHQGLSEIQNTQRAKELLAQAVGTRQHEKTAEQEKIDRSRQVPYHMHINVELMECVYLICSMLLEIPHMASCEFEMRRRMLSRSFHYQLKQSEKASLTGPPENTREHVVAASKAMLNGDWKKCQDYIVNDKMNQKVWNLFHNAETVKGMVVRRIQEESLRTYLLTYSTVYATVSLKKLADLFELSKKDVHSIISKMIIQEELSATLDEPTDCLIMHRVEPSRLQMLALNLSDKLQTLAENNEQILEPRTGRGGYQGPGSWFPGRNERQGDKQKGSGGYQGERRGGQGQDGKRGNWGSQGGQQRRHPQKPRAF</sequence>
<comment type="function">
    <text evidence="1">Component of the eukaryotic translation initiation factor 3 (eIF-3) complex, which is involved in protein synthesis of a specialized repertoire of mRNAs and, together with other initiation factors, stimulates binding of mRNA and methionyl-tRNAi to the 40S ribosome. The eIF-3 complex specifically targets and initiates translation of a subset of mRNAs involved in cell proliferation.</text>
</comment>
<comment type="subunit">
    <text evidence="1">Component of the eukaryotic translation initiation factor 3 (eIF-3) complex.</text>
</comment>
<comment type="subcellular location">
    <subcellularLocation>
        <location evidence="1">Cytoplasm</location>
    </subcellularLocation>
</comment>
<comment type="similarity">
    <text evidence="1">Belongs to the eIF-3 subunit C family.</text>
</comment>
<protein>
    <recommendedName>
        <fullName evidence="1">Eukaryotic translation initiation factor 3 subunit C</fullName>
        <shortName evidence="1">eIF3c</shortName>
    </recommendedName>
    <alternativeName>
        <fullName evidence="1">Eukaryotic translation initiation factor 3 subunit 8</fullName>
    </alternativeName>
</protein>
<name>EIF3C_CAEEL</name>
<keyword id="KW-0963">Cytoplasm</keyword>
<keyword id="KW-0396">Initiation factor</keyword>
<keyword id="KW-0648">Protein biosynthesis</keyword>
<keyword id="KW-1185">Reference proteome</keyword>
<feature type="chain" id="PRO_0000123526" description="Eukaryotic translation initiation factor 3 subunit C">
    <location>
        <begin position="1"/>
        <end position="898"/>
    </location>
</feature>
<feature type="domain" description="PCI" evidence="2">
    <location>
        <begin position="630"/>
        <end position="806"/>
    </location>
</feature>
<feature type="region of interest" description="Disordered" evidence="3">
    <location>
        <begin position="1"/>
        <end position="38"/>
    </location>
</feature>
<feature type="region of interest" description="Disordered" evidence="3">
    <location>
        <begin position="162"/>
        <end position="238"/>
    </location>
</feature>
<feature type="region of interest" description="Disordered" evidence="3">
    <location>
        <begin position="829"/>
        <end position="898"/>
    </location>
</feature>
<feature type="compositionally biased region" description="Basic and acidic residues" evidence="3">
    <location>
        <begin position="1"/>
        <end position="10"/>
    </location>
</feature>
<feature type="compositionally biased region" description="Acidic residues" evidence="3">
    <location>
        <begin position="11"/>
        <end position="23"/>
    </location>
</feature>
<feature type="compositionally biased region" description="Basic and acidic residues" evidence="3">
    <location>
        <begin position="24"/>
        <end position="37"/>
    </location>
</feature>
<feature type="compositionally biased region" description="Acidic residues" evidence="3">
    <location>
        <begin position="170"/>
        <end position="187"/>
    </location>
</feature>
<feature type="compositionally biased region" description="Basic and acidic residues" evidence="3">
    <location>
        <begin position="189"/>
        <end position="202"/>
    </location>
</feature>
<feature type="compositionally biased region" description="Acidic residues" evidence="3">
    <location>
        <begin position="209"/>
        <end position="218"/>
    </location>
</feature>
<feature type="compositionally biased region" description="Low complexity" evidence="3">
    <location>
        <begin position="219"/>
        <end position="228"/>
    </location>
</feature>
<feature type="compositionally biased region" description="Basic and acidic residues" evidence="3">
    <location>
        <begin position="850"/>
        <end position="859"/>
    </location>
</feature>
<feature type="compositionally biased region" description="Basic and acidic residues" evidence="3">
    <location>
        <begin position="866"/>
        <end position="878"/>
    </location>
</feature>
<feature type="compositionally biased region" description="Basic residues" evidence="3">
    <location>
        <begin position="888"/>
        <end position="898"/>
    </location>
</feature>
<dbReference type="EMBL" id="Z81128">
    <property type="protein sequence ID" value="CAB03403.1"/>
    <property type="molecule type" value="Genomic_DNA"/>
</dbReference>
<dbReference type="PIR" id="T25167">
    <property type="entry name" value="T25167"/>
</dbReference>
<dbReference type="RefSeq" id="NP_492638.1">
    <property type="nucleotide sequence ID" value="NM_060237.6"/>
</dbReference>
<dbReference type="SMR" id="O02328"/>
<dbReference type="BioGRID" id="38280">
    <property type="interactions" value="32"/>
</dbReference>
<dbReference type="FunCoup" id="O02328">
    <property type="interactions" value="2578"/>
</dbReference>
<dbReference type="IntAct" id="O02328">
    <property type="interactions" value="4"/>
</dbReference>
<dbReference type="STRING" id="6239.T23D8.4.1"/>
<dbReference type="iPTMnet" id="O02328"/>
<dbReference type="PaxDb" id="6239-T23D8.4"/>
<dbReference type="PeptideAtlas" id="O02328"/>
<dbReference type="EnsemblMetazoa" id="T23D8.4.1">
    <property type="protein sequence ID" value="T23D8.4.1"/>
    <property type="gene ID" value="WBGene00001226"/>
</dbReference>
<dbReference type="GeneID" id="172858"/>
<dbReference type="KEGG" id="cel:CELE_T23D8.4"/>
<dbReference type="AGR" id="WB:WBGene00001226"/>
<dbReference type="CTD" id="172858"/>
<dbReference type="WormBase" id="T23D8.4">
    <property type="protein sequence ID" value="CE18958"/>
    <property type="gene ID" value="WBGene00001226"/>
    <property type="gene designation" value="eif-3.C"/>
</dbReference>
<dbReference type="eggNOG" id="KOG1076">
    <property type="taxonomic scope" value="Eukaryota"/>
</dbReference>
<dbReference type="GeneTree" id="ENSGT00390000017900"/>
<dbReference type="HOGENOM" id="CLU_004304_0_0_1"/>
<dbReference type="InParanoid" id="O02328"/>
<dbReference type="OMA" id="FRCGLIK"/>
<dbReference type="OrthoDB" id="29647at2759"/>
<dbReference type="PhylomeDB" id="O02328"/>
<dbReference type="Reactome" id="R-CEL-156827">
    <property type="pathway name" value="L13a-mediated translational silencing of Ceruloplasmin expression"/>
</dbReference>
<dbReference type="Reactome" id="R-CEL-72649">
    <property type="pathway name" value="Translation initiation complex formation"/>
</dbReference>
<dbReference type="Reactome" id="R-CEL-72689">
    <property type="pathway name" value="Formation of a pool of free 40S subunits"/>
</dbReference>
<dbReference type="Reactome" id="R-CEL-72695">
    <property type="pathway name" value="Formation of the ternary complex, and subsequently, the 43S complex"/>
</dbReference>
<dbReference type="Reactome" id="R-CEL-72702">
    <property type="pathway name" value="Ribosomal scanning and start codon recognition"/>
</dbReference>
<dbReference type="SignaLink" id="O02328"/>
<dbReference type="PRO" id="PR:O02328"/>
<dbReference type="Proteomes" id="UP000001940">
    <property type="component" value="Chromosome I"/>
</dbReference>
<dbReference type="Bgee" id="WBGene00001226">
    <property type="expression patterns" value="Expressed in adult organism and 4 other cell types or tissues"/>
</dbReference>
<dbReference type="GO" id="GO:0016282">
    <property type="term" value="C:eukaryotic 43S preinitiation complex"/>
    <property type="evidence" value="ECO:0007669"/>
    <property type="project" value="UniProtKB-UniRule"/>
</dbReference>
<dbReference type="GO" id="GO:0033290">
    <property type="term" value="C:eukaryotic 48S preinitiation complex"/>
    <property type="evidence" value="ECO:0007669"/>
    <property type="project" value="UniProtKB-UniRule"/>
</dbReference>
<dbReference type="GO" id="GO:0005852">
    <property type="term" value="C:eukaryotic translation initiation factor 3 complex"/>
    <property type="evidence" value="ECO:0000318"/>
    <property type="project" value="GO_Central"/>
</dbReference>
<dbReference type="GO" id="GO:0003723">
    <property type="term" value="F:RNA binding"/>
    <property type="evidence" value="ECO:0007669"/>
    <property type="project" value="InterPro"/>
</dbReference>
<dbReference type="GO" id="GO:0003743">
    <property type="term" value="F:translation initiation factor activity"/>
    <property type="evidence" value="ECO:0007669"/>
    <property type="project" value="UniProtKB-UniRule"/>
</dbReference>
<dbReference type="GO" id="GO:0031369">
    <property type="term" value="F:translation initiation factor binding"/>
    <property type="evidence" value="ECO:0000318"/>
    <property type="project" value="GO_Central"/>
</dbReference>
<dbReference type="GO" id="GO:0001732">
    <property type="term" value="P:formation of cytoplasmic translation initiation complex"/>
    <property type="evidence" value="ECO:0007669"/>
    <property type="project" value="UniProtKB-UniRule"/>
</dbReference>
<dbReference type="GO" id="GO:0006413">
    <property type="term" value="P:translational initiation"/>
    <property type="evidence" value="ECO:0000318"/>
    <property type="project" value="GO_Central"/>
</dbReference>
<dbReference type="Gene3D" id="1.25.40.570">
    <property type="match status" value="1"/>
</dbReference>
<dbReference type="HAMAP" id="MF_03002">
    <property type="entry name" value="eIF3c"/>
    <property type="match status" value="1"/>
</dbReference>
<dbReference type="InterPro" id="IPR027516">
    <property type="entry name" value="EIF3C"/>
</dbReference>
<dbReference type="InterPro" id="IPR008905">
    <property type="entry name" value="EIF3C_N_dom"/>
</dbReference>
<dbReference type="InterPro" id="IPR000717">
    <property type="entry name" value="PCI_dom"/>
</dbReference>
<dbReference type="InterPro" id="IPR036390">
    <property type="entry name" value="WH_DNA-bd_sf"/>
</dbReference>
<dbReference type="PANTHER" id="PTHR13937">
    <property type="entry name" value="EUKARYOTIC TRANSLATION INITATION FACTOR 3, SUBUNIT 8 EIF3S8 -RELATED"/>
    <property type="match status" value="1"/>
</dbReference>
<dbReference type="PANTHER" id="PTHR13937:SF0">
    <property type="entry name" value="EUKARYOTIC TRANSLATION INITIATION FACTOR 3 SUBUNIT C-RELATED"/>
    <property type="match status" value="1"/>
</dbReference>
<dbReference type="Pfam" id="PF05470">
    <property type="entry name" value="eIF-3c_N"/>
    <property type="match status" value="1"/>
</dbReference>
<dbReference type="Pfam" id="PF01399">
    <property type="entry name" value="PCI"/>
    <property type="match status" value="1"/>
</dbReference>
<dbReference type="SMART" id="SM00088">
    <property type="entry name" value="PINT"/>
    <property type="match status" value="1"/>
</dbReference>
<dbReference type="SUPFAM" id="SSF46785">
    <property type="entry name" value="Winged helix' DNA-binding domain"/>
    <property type="match status" value="1"/>
</dbReference>
<dbReference type="PROSITE" id="PS50250">
    <property type="entry name" value="PCI"/>
    <property type="match status" value="1"/>
</dbReference>
<gene>
    <name evidence="1" type="primary">eif-3.C</name>
    <name type="ORF">T23D8.4</name>
</gene>
<accession>O02328</accession>